<proteinExistence type="inferred from homology"/>
<reference key="1">
    <citation type="journal article" date="2004" name="Proc. Natl. Acad. Sci. U.S.A.">
        <title>Complete genomes of two clinical Staphylococcus aureus strains: evidence for the rapid evolution of virulence and drug resistance.</title>
        <authorList>
            <person name="Holden M.T.G."/>
            <person name="Feil E.J."/>
            <person name="Lindsay J.A."/>
            <person name="Peacock S.J."/>
            <person name="Day N.P.J."/>
            <person name="Enright M.C."/>
            <person name="Foster T.J."/>
            <person name="Moore C.E."/>
            <person name="Hurst L."/>
            <person name="Atkin R."/>
            <person name="Barron A."/>
            <person name="Bason N."/>
            <person name="Bentley S.D."/>
            <person name="Chillingworth C."/>
            <person name="Chillingworth T."/>
            <person name="Churcher C."/>
            <person name="Clark L."/>
            <person name="Corton C."/>
            <person name="Cronin A."/>
            <person name="Doggett J."/>
            <person name="Dowd L."/>
            <person name="Feltwell T."/>
            <person name="Hance Z."/>
            <person name="Harris B."/>
            <person name="Hauser H."/>
            <person name="Holroyd S."/>
            <person name="Jagels K."/>
            <person name="James K.D."/>
            <person name="Lennard N."/>
            <person name="Line A."/>
            <person name="Mayes R."/>
            <person name="Moule S."/>
            <person name="Mungall K."/>
            <person name="Ormond D."/>
            <person name="Quail M.A."/>
            <person name="Rabbinowitsch E."/>
            <person name="Rutherford K.M."/>
            <person name="Sanders M."/>
            <person name="Sharp S."/>
            <person name="Simmonds M."/>
            <person name="Stevens K."/>
            <person name="Whitehead S."/>
            <person name="Barrell B.G."/>
            <person name="Spratt B.G."/>
            <person name="Parkhill J."/>
        </authorList>
    </citation>
    <scope>NUCLEOTIDE SEQUENCE [LARGE SCALE GENOMIC DNA]</scope>
    <source>
        <strain>MSSA476</strain>
    </source>
</reference>
<dbReference type="EMBL" id="BX571857">
    <property type="protein sequence ID" value="CAG43293.1"/>
    <property type="molecule type" value="Genomic_DNA"/>
</dbReference>
<dbReference type="RefSeq" id="WP_001095260.1">
    <property type="nucleotide sequence ID" value="NC_002953.3"/>
</dbReference>
<dbReference type="SMR" id="Q6G912"/>
<dbReference type="KEGG" id="sas:SAS1492"/>
<dbReference type="HOGENOM" id="CLU_096072_5_1_9"/>
<dbReference type="GO" id="GO:0005737">
    <property type="term" value="C:cytoplasm"/>
    <property type="evidence" value="ECO:0007669"/>
    <property type="project" value="UniProtKB-SubCell"/>
</dbReference>
<dbReference type="GO" id="GO:0003700">
    <property type="term" value="F:DNA-binding transcription factor activity"/>
    <property type="evidence" value="ECO:0007669"/>
    <property type="project" value="InterPro"/>
</dbReference>
<dbReference type="GO" id="GO:0000976">
    <property type="term" value="F:transcription cis-regulatory region binding"/>
    <property type="evidence" value="ECO:0007669"/>
    <property type="project" value="TreeGrafter"/>
</dbReference>
<dbReference type="GO" id="GO:0008270">
    <property type="term" value="F:zinc ion binding"/>
    <property type="evidence" value="ECO:0007669"/>
    <property type="project" value="TreeGrafter"/>
</dbReference>
<dbReference type="GO" id="GO:0045892">
    <property type="term" value="P:negative regulation of DNA-templated transcription"/>
    <property type="evidence" value="ECO:0007669"/>
    <property type="project" value="TreeGrafter"/>
</dbReference>
<dbReference type="GO" id="GO:1900376">
    <property type="term" value="P:regulation of secondary metabolite biosynthetic process"/>
    <property type="evidence" value="ECO:0007669"/>
    <property type="project" value="TreeGrafter"/>
</dbReference>
<dbReference type="CDD" id="cd07153">
    <property type="entry name" value="Fur_like"/>
    <property type="match status" value="1"/>
</dbReference>
<dbReference type="Gene3D" id="3.30.1490.190">
    <property type="match status" value="1"/>
</dbReference>
<dbReference type="Gene3D" id="1.10.10.10">
    <property type="entry name" value="Winged helix-like DNA-binding domain superfamily/Winged helix DNA-binding domain"/>
    <property type="match status" value="1"/>
</dbReference>
<dbReference type="InterPro" id="IPR002481">
    <property type="entry name" value="FUR"/>
</dbReference>
<dbReference type="InterPro" id="IPR043135">
    <property type="entry name" value="Fur_C"/>
</dbReference>
<dbReference type="InterPro" id="IPR036388">
    <property type="entry name" value="WH-like_DNA-bd_sf"/>
</dbReference>
<dbReference type="InterPro" id="IPR036390">
    <property type="entry name" value="WH_DNA-bd_sf"/>
</dbReference>
<dbReference type="PANTHER" id="PTHR33202:SF1">
    <property type="entry name" value="FERRIC UPTAKE REGULATION PROTEIN"/>
    <property type="match status" value="1"/>
</dbReference>
<dbReference type="PANTHER" id="PTHR33202">
    <property type="entry name" value="ZINC UPTAKE REGULATION PROTEIN"/>
    <property type="match status" value="1"/>
</dbReference>
<dbReference type="Pfam" id="PF01475">
    <property type="entry name" value="FUR"/>
    <property type="match status" value="1"/>
</dbReference>
<dbReference type="SUPFAM" id="SSF46785">
    <property type="entry name" value="Winged helix' DNA-binding domain"/>
    <property type="match status" value="1"/>
</dbReference>
<sequence>MNTNDAIKILKENGLKYTDKRKDMLDIFVEEDKYINAKYIQQVMDENYPGISFDTIYRNLHLFKDLGIIENTELDGEMKFRIACTNHHHHHFICEKCGDTKVIDYCPIDQIKLSLPGVNIHKHKLEVYGVCESCQD</sequence>
<comment type="function">
    <text evidence="1">Acts as a global negative controlling element, employing Fe(2+) as a cofactor to bind the operator of the repressed genes.</text>
</comment>
<comment type="subunit">
    <text evidence="1">Homodimer.</text>
</comment>
<comment type="subcellular location">
    <subcellularLocation>
        <location evidence="1">Cytoplasm</location>
    </subcellularLocation>
</comment>
<comment type="similarity">
    <text evidence="2">Belongs to the Fur family.</text>
</comment>
<accession>Q6G912</accession>
<name>FUR_STAAS</name>
<gene>
    <name type="primary">fur</name>
    <name type="synonym">furA</name>
    <name type="synonym">mreR</name>
    <name type="ordered locus">SAS1492</name>
</gene>
<evidence type="ECO:0000250" key="1"/>
<evidence type="ECO:0000305" key="2"/>
<organism>
    <name type="scientific">Staphylococcus aureus (strain MSSA476)</name>
    <dbReference type="NCBI Taxonomy" id="282459"/>
    <lineage>
        <taxon>Bacteria</taxon>
        <taxon>Bacillati</taxon>
        <taxon>Bacillota</taxon>
        <taxon>Bacilli</taxon>
        <taxon>Bacillales</taxon>
        <taxon>Staphylococcaceae</taxon>
        <taxon>Staphylococcus</taxon>
    </lineage>
</organism>
<protein>
    <recommendedName>
        <fullName>Ferric uptake regulation protein</fullName>
        <shortName>Ferric uptake regulator</shortName>
    </recommendedName>
</protein>
<feature type="chain" id="PRO_0000095576" description="Ferric uptake regulation protein">
    <location>
        <begin position="1"/>
        <end position="136"/>
    </location>
</feature>
<feature type="region of interest" description="DNA-binding" evidence="1">
    <location>
        <begin position="1"/>
        <end position="85"/>
    </location>
</feature>
<feature type="region of interest" description="Dimerization" evidence="1">
    <location>
        <begin position="86"/>
        <end position="136"/>
    </location>
</feature>
<feature type="binding site" evidence="1">
    <location>
        <position position="88"/>
    </location>
    <ligand>
        <name>Fe cation</name>
        <dbReference type="ChEBI" id="CHEBI:24875"/>
    </ligand>
</feature>
<feature type="binding site" evidence="1">
    <location>
        <position position="90"/>
    </location>
    <ligand>
        <name>Fe cation</name>
        <dbReference type="ChEBI" id="CHEBI:24875"/>
    </ligand>
</feature>
<feature type="binding site" evidence="1">
    <location>
        <position position="94"/>
    </location>
    <ligand>
        <name>Zn(2+)</name>
        <dbReference type="ChEBI" id="CHEBI:29105"/>
    </ligand>
</feature>
<feature type="binding site" evidence="1">
    <location>
        <position position="97"/>
    </location>
    <ligand>
        <name>Zn(2+)</name>
        <dbReference type="ChEBI" id="CHEBI:29105"/>
    </ligand>
</feature>
<feature type="binding site" evidence="1">
    <location>
        <position position="109"/>
    </location>
    <ligand>
        <name>Fe cation</name>
        <dbReference type="ChEBI" id="CHEBI:24875"/>
    </ligand>
</feature>
<feature type="binding site" evidence="1">
    <location>
        <position position="123"/>
    </location>
    <ligand>
        <name>Fe cation</name>
        <dbReference type="ChEBI" id="CHEBI:24875"/>
    </ligand>
</feature>
<keyword id="KW-0963">Cytoplasm</keyword>
<keyword id="KW-0238">DNA-binding</keyword>
<keyword id="KW-0408">Iron</keyword>
<keyword id="KW-0479">Metal-binding</keyword>
<keyword id="KW-0678">Repressor</keyword>
<keyword id="KW-0804">Transcription</keyword>
<keyword id="KW-0805">Transcription regulation</keyword>
<keyword id="KW-0862">Zinc</keyword>